<dbReference type="EC" id="2.7.2.8" evidence="1"/>
<dbReference type="EMBL" id="CP000468">
    <property type="protein sequence ID" value="ABJ03427.1"/>
    <property type="status" value="ALT_INIT"/>
    <property type="molecule type" value="Genomic_DNA"/>
</dbReference>
<dbReference type="RefSeq" id="WP_001302318.1">
    <property type="nucleotide sequence ID" value="NZ_CADILS010000014.1"/>
</dbReference>
<dbReference type="SMR" id="A1AID7"/>
<dbReference type="GeneID" id="75203211"/>
<dbReference type="KEGG" id="ecv:APECO1_2508"/>
<dbReference type="HOGENOM" id="CLU_053680_1_1_6"/>
<dbReference type="UniPathway" id="UPA00068">
    <property type="reaction ID" value="UER00107"/>
</dbReference>
<dbReference type="Proteomes" id="UP000008216">
    <property type="component" value="Chromosome"/>
</dbReference>
<dbReference type="GO" id="GO:0005737">
    <property type="term" value="C:cytoplasm"/>
    <property type="evidence" value="ECO:0007669"/>
    <property type="project" value="UniProtKB-SubCell"/>
</dbReference>
<dbReference type="GO" id="GO:0003991">
    <property type="term" value="F:acetylglutamate kinase activity"/>
    <property type="evidence" value="ECO:0007669"/>
    <property type="project" value="UniProtKB-UniRule"/>
</dbReference>
<dbReference type="GO" id="GO:0005524">
    <property type="term" value="F:ATP binding"/>
    <property type="evidence" value="ECO:0007669"/>
    <property type="project" value="UniProtKB-UniRule"/>
</dbReference>
<dbReference type="GO" id="GO:0042450">
    <property type="term" value="P:arginine biosynthetic process via ornithine"/>
    <property type="evidence" value="ECO:0007669"/>
    <property type="project" value="UniProtKB-UniRule"/>
</dbReference>
<dbReference type="GO" id="GO:0006526">
    <property type="term" value="P:L-arginine biosynthetic process"/>
    <property type="evidence" value="ECO:0007669"/>
    <property type="project" value="UniProtKB-UniPathway"/>
</dbReference>
<dbReference type="CDD" id="cd04249">
    <property type="entry name" value="AAK_NAGK-NC"/>
    <property type="match status" value="1"/>
</dbReference>
<dbReference type="FunFam" id="3.40.1160.10:FF:000008">
    <property type="entry name" value="Acetylglutamate kinase"/>
    <property type="match status" value="1"/>
</dbReference>
<dbReference type="Gene3D" id="3.40.1160.10">
    <property type="entry name" value="Acetylglutamate kinase-like"/>
    <property type="match status" value="1"/>
</dbReference>
<dbReference type="HAMAP" id="MF_00082">
    <property type="entry name" value="ArgB"/>
    <property type="match status" value="1"/>
</dbReference>
<dbReference type="InterPro" id="IPR036393">
    <property type="entry name" value="AceGlu_kinase-like_sf"/>
</dbReference>
<dbReference type="InterPro" id="IPR004662">
    <property type="entry name" value="AcgluKinase_fam"/>
</dbReference>
<dbReference type="InterPro" id="IPR037528">
    <property type="entry name" value="ArgB"/>
</dbReference>
<dbReference type="InterPro" id="IPR001048">
    <property type="entry name" value="Asp/Glu/Uridylate_kinase"/>
</dbReference>
<dbReference type="InterPro" id="IPR041731">
    <property type="entry name" value="NAGK-NC"/>
</dbReference>
<dbReference type="NCBIfam" id="TIGR00761">
    <property type="entry name" value="argB"/>
    <property type="match status" value="1"/>
</dbReference>
<dbReference type="PANTHER" id="PTHR23342">
    <property type="entry name" value="N-ACETYLGLUTAMATE SYNTHASE"/>
    <property type="match status" value="1"/>
</dbReference>
<dbReference type="PANTHER" id="PTHR23342:SF0">
    <property type="entry name" value="N-ACETYLGLUTAMATE SYNTHASE, MITOCHONDRIAL"/>
    <property type="match status" value="1"/>
</dbReference>
<dbReference type="Pfam" id="PF00696">
    <property type="entry name" value="AA_kinase"/>
    <property type="match status" value="1"/>
</dbReference>
<dbReference type="PIRSF" id="PIRSF000728">
    <property type="entry name" value="NAGK"/>
    <property type="match status" value="1"/>
</dbReference>
<dbReference type="SUPFAM" id="SSF53633">
    <property type="entry name" value="Carbamate kinase-like"/>
    <property type="match status" value="1"/>
</dbReference>
<protein>
    <recommendedName>
        <fullName evidence="1">Acetylglutamate kinase</fullName>
        <ecNumber evidence="1">2.7.2.8</ecNumber>
    </recommendedName>
    <alternativeName>
        <fullName evidence="1">N-acetyl-L-glutamate 5-phosphotransferase</fullName>
    </alternativeName>
    <alternativeName>
        <fullName evidence="1">NAG kinase</fullName>
        <shortName evidence="1">NAGK</shortName>
    </alternativeName>
</protein>
<feature type="chain" id="PRO_0000335631" description="Acetylglutamate kinase">
    <location>
        <begin position="1"/>
        <end position="258"/>
    </location>
</feature>
<feature type="binding site" evidence="1">
    <location>
        <begin position="44"/>
        <end position="45"/>
    </location>
    <ligand>
        <name>substrate</name>
    </ligand>
</feature>
<feature type="binding site" evidence="1">
    <location>
        <position position="66"/>
    </location>
    <ligand>
        <name>substrate</name>
    </ligand>
</feature>
<feature type="binding site" evidence="1">
    <location>
        <position position="158"/>
    </location>
    <ligand>
        <name>substrate</name>
    </ligand>
</feature>
<feature type="binding site" evidence="1">
    <location>
        <begin position="181"/>
        <end position="186"/>
    </location>
    <ligand>
        <name>ATP</name>
        <dbReference type="ChEBI" id="CHEBI:30616"/>
    </ligand>
</feature>
<feature type="binding site" evidence="1">
    <location>
        <begin position="209"/>
        <end position="211"/>
    </location>
    <ligand>
        <name>ATP</name>
        <dbReference type="ChEBI" id="CHEBI:30616"/>
    </ligand>
</feature>
<feature type="site" description="Transition state stabilizer" evidence="1">
    <location>
        <position position="8"/>
    </location>
</feature>
<feature type="site" description="Transition state stabilizer" evidence="1">
    <location>
        <position position="217"/>
    </location>
</feature>
<keyword id="KW-0028">Amino-acid biosynthesis</keyword>
<keyword id="KW-0055">Arginine biosynthesis</keyword>
<keyword id="KW-0067">ATP-binding</keyword>
<keyword id="KW-0963">Cytoplasm</keyword>
<keyword id="KW-0418">Kinase</keyword>
<keyword id="KW-0547">Nucleotide-binding</keyword>
<keyword id="KW-1185">Reference proteome</keyword>
<keyword id="KW-0808">Transferase</keyword>
<name>ARGB_ECOK1</name>
<organism>
    <name type="scientific">Escherichia coli O1:K1 / APEC</name>
    <dbReference type="NCBI Taxonomy" id="405955"/>
    <lineage>
        <taxon>Bacteria</taxon>
        <taxon>Pseudomonadati</taxon>
        <taxon>Pseudomonadota</taxon>
        <taxon>Gammaproteobacteria</taxon>
        <taxon>Enterobacterales</taxon>
        <taxon>Enterobacteriaceae</taxon>
        <taxon>Escherichia</taxon>
    </lineage>
</organism>
<proteinExistence type="inferred from homology"/>
<sequence length="258" mass="27160">MMNPLIIKLGGVLLDSEEALERLFSALVNYRESHQRPLVIVHGGGCVVDELMKGLNLPVKKKNGLRVTPADQIDIITGALAGTANKTLLAWAKKHQIAAVGLFLGDGDSVKVTQLDEELGHVGLAQPGSPKLINSLLENGYLPVVSSIGVTDEGQLMNVNADQAATALAATLGADLILLSDVSGILDGKGQRIAEMTAAKAEQLIEQGIITDGMIVKVNAALDAARTLGRPVDIASWRHAEQLPALFNGMPMGTRILA</sequence>
<accession>A1AID7</accession>
<gene>
    <name evidence="1" type="primary">argB</name>
    <name type="ordered locus">Ecok1_39330</name>
    <name type="ORF">APECO1_2508</name>
</gene>
<comment type="function">
    <text evidence="1">Catalyzes the ATP-dependent phosphorylation of N-acetyl-L-glutamate.</text>
</comment>
<comment type="catalytic activity">
    <reaction evidence="1">
        <text>N-acetyl-L-glutamate + ATP = N-acetyl-L-glutamyl 5-phosphate + ADP</text>
        <dbReference type="Rhea" id="RHEA:14629"/>
        <dbReference type="ChEBI" id="CHEBI:30616"/>
        <dbReference type="ChEBI" id="CHEBI:44337"/>
        <dbReference type="ChEBI" id="CHEBI:57936"/>
        <dbReference type="ChEBI" id="CHEBI:456216"/>
        <dbReference type="EC" id="2.7.2.8"/>
    </reaction>
</comment>
<comment type="pathway">
    <text evidence="1">Amino-acid biosynthesis; L-arginine biosynthesis; N(2)-acetyl-L-ornithine from L-glutamate: step 2/4.</text>
</comment>
<comment type="subunit">
    <text evidence="1">Homodimer.</text>
</comment>
<comment type="subcellular location">
    <subcellularLocation>
        <location evidence="1">Cytoplasm</location>
    </subcellularLocation>
</comment>
<comment type="similarity">
    <text evidence="1">Belongs to the acetylglutamate kinase family. ArgB subfamily.</text>
</comment>
<comment type="sequence caution" evidence="2">
    <conflict type="erroneous initiation">
        <sequence resource="EMBL-CDS" id="ABJ03427"/>
    </conflict>
</comment>
<reference key="1">
    <citation type="journal article" date="2007" name="J. Bacteriol.">
        <title>The genome sequence of avian pathogenic Escherichia coli strain O1:K1:H7 shares strong similarities with human extraintestinal pathogenic E. coli genomes.</title>
        <authorList>
            <person name="Johnson T.J."/>
            <person name="Kariyawasam S."/>
            <person name="Wannemuehler Y."/>
            <person name="Mangiamele P."/>
            <person name="Johnson S.J."/>
            <person name="Doetkott C."/>
            <person name="Skyberg J.A."/>
            <person name="Lynne A.M."/>
            <person name="Johnson J.R."/>
            <person name="Nolan L.K."/>
        </authorList>
    </citation>
    <scope>NUCLEOTIDE SEQUENCE [LARGE SCALE GENOMIC DNA]</scope>
</reference>
<evidence type="ECO:0000255" key="1">
    <source>
        <dbReference type="HAMAP-Rule" id="MF_00082"/>
    </source>
</evidence>
<evidence type="ECO:0000305" key="2"/>